<geneLocation type="chloroplast"/>
<comment type="function">
    <text evidence="1">DNA-dependent RNA polymerase catalyzes the transcription of DNA into RNA using the four ribonucleoside triphosphates as substrates.</text>
</comment>
<comment type="catalytic activity">
    <reaction evidence="1">
        <text>RNA(n) + a ribonucleoside 5'-triphosphate = RNA(n+1) + diphosphate</text>
        <dbReference type="Rhea" id="RHEA:21248"/>
        <dbReference type="Rhea" id="RHEA-COMP:14527"/>
        <dbReference type="Rhea" id="RHEA-COMP:17342"/>
        <dbReference type="ChEBI" id="CHEBI:33019"/>
        <dbReference type="ChEBI" id="CHEBI:61557"/>
        <dbReference type="ChEBI" id="CHEBI:140395"/>
        <dbReference type="EC" id="2.7.7.6"/>
    </reaction>
</comment>
<comment type="cofactor">
    <cofactor evidence="1">
        <name>Zn(2+)</name>
        <dbReference type="ChEBI" id="CHEBI:29105"/>
    </cofactor>
    <text evidence="1">Binds 1 Zn(2+) ion per subunit.</text>
</comment>
<comment type="subunit">
    <text evidence="1">In plastids the minimal PEP RNA polymerase catalytic core is composed of four subunits: alpha, beta, beta', and beta''. When a (nuclear-encoded) sigma factor is associated with the core the holoenzyme is formed, which can initiate transcription.</text>
</comment>
<comment type="subcellular location">
    <subcellularLocation>
        <location evidence="1">Plastid</location>
        <location evidence="1">Chloroplast</location>
    </subcellularLocation>
</comment>
<comment type="similarity">
    <text evidence="1">Belongs to the RNA polymerase beta' chain family. RpoC2 subfamily.</text>
</comment>
<accession>Q6B8R6</accession>
<reference key="1">
    <citation type="journal article" date="2004" name="J. Mol. Evol.">
        <title>Comparative analysis of the complete plastid genome sequence of the red alga Gracilaria tenuistipitata var. liui provides insights into the evolution of rhodoplasts and their relationship to other plastids.</title>
        <authorList>
            <person name="Hagopian J.C."/>
            <person name="Reis M."/>
            <person name="Kitajima J.P."/>
            <person name="Bhattacharya D."/>
            <person name="de Oliveira M.C."/>
        </authorList>
    </citation>
    <scope>NUCLEOTIDE SEQUENCE [LARGE SCALE GENOMIC DNA]</scope>
</reference>
<feature type="chain" id="PRO_0000067925" description="DNA-directed RNA polymerase subunit beta''">
    <location>
        <begin position="1"/>
        <end position="1228"/>
    </location>
</feature>
<feature type="binding site" evidence="1">
    <location>
        <position position="222"/>
    </location>
    <ligand>
        <name>Zn(2+)</name>
        <dbReference type="ChEBI" id="CHEBI:29105"/>
    </ligand>
</feature>
<feature type="binding site" evidence="1">
    <location>
        <position position="296"/>
    </location>
    <ligand>
        <name>Zn(2+)</name>
        <dbReference type="ChEBI" id="CHEBI:29105"/>
    </ligand>
</feature>
<feature type="binding site" evidence="1">
    <location>
        <position position="303"/>
    </location>
    <ligand>
        <name>Zn(2+)</name>
        <dbReference type="ChEBI" id="CHEBI:29105"/>
    </ligand>
</feature>
<feature type="binding site" evidence="1">
    <location>
        <position position="306"/>
    </location>
    <ligand>
        <name>Zn(2+)</name>
        <dbReference type="ChEBI" id="CHEBI:29105"/>
    </ligand>
</feature>
<sequence length="1228" mass="138415">MTQDKSIEPFFLNKVVDKSQLRQLIIWAFRNYGIARASNMADTLKDLGFLYATKAGISLSLEDLRIPPAKNNLLKTTIDLINDTDTKYRKGEITAVERFQKVIDTWNSASDTLKKQVIKYFTEKDPLNSIYMMAFSGARANISQVRQLVGMRGLMADPQGQIIDLPISSNFREGLTITDYFISSYGARKGLVDTALRTADSGYLTRRLVDVAQDVIIREADCNTSKGIVLESMIDNRKTLVSLHQALIGRVLAEDLFNPAGSKLVAKLNTEISPDLANEIISLGISSVLVRSPITCESIKSVCQSCYGWNLAHGRIVDLGEAVGIIAAQSIGEPGTQLTMRTFHTGGVFTGELAQTVISSSDCQVEYPSNIILSDTRTRHGDHAFLVEKDIKLKLLDFNKKQTSLSLVKGSLLFVKHLEYITSGQVIAEYPISNRLITEKAQKAVLADFSGSIYLMDLSVSNIQSEQQTFKNVIKGGVIWILAGHVFSIPYNTQLIISENDFIDENHLIGKTEFVSRYEGRVRILKKKQDFIQDIVIITSSKTYINIDVLTKFYNGYTNHFLITNQQDKFILKTLPNQTIVDQQLIAELITNIYRTNTGGIIKYLDLSVSDKKVDLNSKKDYYDIVDGGYVLWIGEETHEINKDISLLLVSHGQLIDEGTEIVKNIFTNSSGIVDIIQKEGIVREIIIKPGILYPHSKFYDHKSKSRGFLKPGEIISNDLKTDKLVYWEYFYVKNQSYTLIRPVIVYSIPSKTIQFKYSADSFNSHICSLKLVKRIYFRDGERVKSVSGIDIVKTYLIAELNKDSLNLKCTLQLNLDSNNRSISRMRIVTMDKLSLKDENNIASTKDLYTRTRLLVTNNQYIKSGTVVAQTELFSSLEGQVVSIQKNKSSNPRILLITSLDTKVFSINNNQNIKVNINDLIYAGDEIATNIISYISGQVISIRDNQITVRLGQPYLISEGSFLHVNNQALIQRGENIATLIFERVKTGDIVQGLPRIEEILEARKKSDSFFNPHVVLDSKFRQYVNQGLNLYDATRLSLLILQLYLVKELQLVYQSQGVEIADKHIEVIVRQMTSKVKIENGGDTDHLPGEIIELQKIEMLNKALRLASKEEALYYPILLGITKASLNTESFISAASFQETTKVLTDAAISCKLDWLRGLKENVIIGRLIPAGTGFNIYNNMQLNYQDEKYSYTKNLLSLPQNTKNLNFEDIIVDDRNAHMYSRNNNL</sequence>
<organism>
    <name type="scientific">Gracilaria tenuistipitata var. liui</name>
    <name type="common">Red alga</name>
    <dbReference type="NCBI Taxonomy" id="285951"/>
    <lineage>
        <taxon>Eukaryota</taxon>
        <taxon>Rhodophyta</taxon>
        <taxon>Florideophyceae</taxon>
        <taxon>Rhodymeniophycidae</taxon>
        <taxon>Gracilariales</taxon>
        <taxon>Gracilariaceae</taxon>
        <taxon>Gracilaria</taxon>
        <taxon>Gracilaria tenuistipitata</taxon>
    </lineage>
</organism>
<keyword id="KW-0150">Chloroplast</keyword>
<keyword id="KW-0240">DNA-directed RNA polymerase</keyword>
<keyword id="KW-0479">Metal-binding</keyword>
<keyword id="KW-0548">Nucleotidyltransferase</keyword>
<keyword id="KW-0934">Plastid</keyword>
<keyword id="KW-0804">Transcription</keyword>
<keyword id="KW-0808">Transferase</keyword>
<keyword id="KW-0862">Zinc</keyword>
<proteinExistence type="inferred from homology"/>
<name>RPOC2_GRATL</name>
<dbReference type="EC" id="2.7.7.6" evidence="1"/>
<dbReference type="EMBL" id="AY673996">
    <property type="protein sequence ID" value="AAT79719.1"/>
    <property type="molecule type" value="Genomic_DNA"/>
</dbReference>
<dbReference type="RefSeq" id="YP_063644.1">
    <property type="nucleotide sequence ID" value="NC_006137.1"/>
</dbReference>
<dbReference type="SMR" id="Q6B8R6"/>
<dbReference type="GeneID" id="2944055"/>
<dbReference type="GO" id="GO:0009507">
    <property type="term" value="C:chloroplast"/>
    <property type="evidence" value="ECO:0007669"/>
    <property type="project" value="UniProtKB-SubCell"/>
</dbReference>
<dbReference type="GO" id="GO:0000428">
    <property type="term" value="C:DNA-directed RNA polymerase complex"/>
    <property type="evidence" value="ECO:0007669"/>
    <property type="project" value="UniProtKB-KW"/>
</dbReference>
<dbReference type="GO" id="GO:0005739">
    <property type="term" value="C:mitochondrion"/>
    <property type="evidence" value="ECO:0007669"/>
    <property type="project" value="GOC"/>
</dbReference>
<dbReference type="GO" id="GO:0003677">
    <property type="term" value="F:DNA binding"/>
    <property type="evidence" value="ECO:0007669"/>
    <property type="project" value="UniProtKB-UniRule"/>
</dbReference>
<dbReference type="GO" id="GO:0003899">
    <property type="term" value="F:DNA-directed RNA polymerase activity"/>
    <property type="evidence" value="ECO:0007669"/>
    <property type="project" value="UniProtKB-UniRule"/>
</dbReference>
<dbReference type="GO" id="GO:0008270">
    <property type="term" value="F:zinc ion binding"/>
    <property type="evidence" value="ECO:0007669"/>
    <property type="project" value="UniProtKB-UniRule"/>
</dbReference>
<dbReference type="GO" id="GO:0006351">
    <property type="term" value="P:DNA-templated transcription"/>
    <property type="evidence" value="ECO:0007669"/>
    <property type="project" value="UniProtKB-UniRule"/>
</dbReference>
<dbReference type="CDD" id="cd02655">
    <property type="entry name" value="RNAP_beta'_C"/>
    <property type="match status" value="1"/>
</dbReference>
<dbReference type="FunFam" id="1.10.150.390:FF:000002">
    <property type="entry name" value="DNA-directed RNA polymerase subunit beta"/>
    <property type="match status" value="1"/>
</dbReference>
<dbReference type="Gene3D" id="1.10.132.30">
    <property type="match status" value="1"/>
</dbReference>
<dbReference type="Gene3D" id="1.10.150.390">
    <property type="match status" value="1"/>
</dbReference>
<dbReference type="Gene3D" id="1.10.1790.20">
    <property type="match status" value="1"/>
</dbReference>
<dbReference type="Gene3D" id="1.10.274.100">
    <property type="entry name" value="RNA polymerase Rpb1, domain 3"/>
    <property type="match status" value="1"/>
</dbReference>
<dbReference type="HAMAP" id="MF_01324">
    <property type="entry name" value="RNApol_bact_RpoC2"/>
    <property type="match status" value="1"/>
</dbReference>
<dbReference type="InterPro" id="IPR012756">
    <property type="entry name" value="DNA-dir_RpoC2_beta_pp"/>
</dbReference>
<dbReference type="InterPro" id="IPR045867">
    <property type="entry name" value="DNA-dir_RpoC_beta_prime"/>
</dbReference>
<dbReference type="InterPro" id="IPR007066">
    <property type="entry name" value="RNA_pol_Rpb1_3"/>
</dbReference>
<dbReference type="InterPro" id="IPR042102">
    <property type="entry name" value="RNA_pol_Rpb1_3_sf"/>
</dbReference>
<dbReference type="InterPro" id="IPR007083">
    <property type="entry name" value="RNA_pol_Rpb1_4"/>
</dbReference>
<dbReference type="InterPro" id="IPR007081">
    <property type="entry name" value="RNA_pol_Rpb1_5"/>
</dbReference>
<dbReference type="InterPro" id="IPR038120">
    <property type="entry name" value="Rpb1_funnel_sf"/>
</dbReference>
<dbReference type="NCBIfam" id="TIGR02388">
    <property type="entry name" value="rpoC2_cyan"/>
    <property type="match status" value="1"/>
</dbReference>
<dbReference type="PANTHER" id="PTHR19376">
    <property type="entry name" value="DNA-DIRECTED RNA POLYMERASE"/>
    <property type="match status" value="1"/>
</dbReference>
<dbReference type="PANTHER" id="PTHR19376:SF68">
    <property type="entry name" value="DNA-DIRECTED RNA POLYMERASE SUBUNIT BETA"/>
    <property type="match status" value="1"/>
</dbReference>
<dbReference type="Pfam" id="PF04983">
    <property type="entry name" value="RNA_pol_Rpb1_3"/>
    <property type="match status" value="1"/>
</dbReference>
<dbReference type="Pfam" id="PF05000">
    <property type="entry name" value="RNA_pol_Rpb1_4"/>
    <property type="match status" value="1"/>
</dbReference>
<dbReference type="Pfam" id="PF04998">
    <property type="entry name" value="RNA_pol_Rpb1_5"/>
    <property type="match status" value="2"/>
</dbReference>
<dbReference type="SUPFAM" id="SSF64484">
    <property type="entry name" value="beta and beta-prime subunits of DNA dependent RNA-polymerase"/>
    <property type="match status" value="1"/>
</dbReference>
<protein>
    <recommendedName>
        <fullName evidence="1">DNA-directed RNA polymerase subunit beta''</fullName>
        <ecNumber evidence="1">2.7.7.6</ecNumber>
    </recommendedName>
    <alternativeName>
        <fullName evidence="1">PEP</fullName>
    </alternativeName>
    <alternativeName>
        <fullName evidence="1">Plastid-encoded RNA polymerase subunit beta''</fullName>
        <shortName evidence="1">RNA polymerase subunit beta''</shortName>
    </alternativeName>
</protein>
<evidence type="ECO:0000255" key="1">
    <source>
        <dbReference type="HAMAP-Rule" id="MF_01324"/>
    </source>
</evidence>
<gene>
    <name evidence="1" type="primary">rpoC2</name>
    <name type="ordered locus">Grc000138</name>
</gene>